<feature type="initiator methionine" description="Removed" evidence="2">
    <location>
        <position position="1"/>
    </location>
</feature>
<feature type="chain" id="PRO_0000164848" description="Capsid protein">
    <location>
        <begin position="2"/>
        <end position="130"/>
    </location>
</feature>
<feature type="region of interest" description="Viral RNA-binding" evidence="1">
    <location>
        <begin position="32"/>
        <end position="105"/>
    </location>
</feature>
<feature type="sequence conflict" description="In Ref. 1; BAE54365." ref="1">
    <original>NDGGTGN</original>
    <variation>DNGGTGD</variation>
    <location>
        <begin position="12"/>
        <end position="18"/>
    </location>
</feature>
<protein>
    <recommendedName>
        <fullName>Capsid protein</fullName>
        <shortName>CP</shortName>
    </recommendedName>
    <alternativeName>
        <fullName>Coat protein</fullName>
    </alternativeName>
</protein>
<proteinExistence type="evidence at protein level"/>
<keyword id="KW-0167">Capsid protein</keyword>
<keyword id="KW-0903">Direct protein sequencing</keyword>
<keyword id="KW-0694">RNA-binding</keyword>
<keyword id="KW-1142">T=3 icosahedral capsid protein</keyword>
<keyword id="KW-0810">Translation regulation</keyword>
<keyword id="KW-0946">Virion</keyword>
<comment type="function">
    <text evidence="1">Capsid protein self-assembles to form an icosahedral capsid with a T=3 symmetry, about 26 nm in diameter, and consisting of 89 capsid proteins dimers (178 capsid proteins). Involved in viral genome encapsidation through the interaction between a capsid protein dimer and the multiple packaging signals present in the RNA genome. The capsid also contains 1 copy of the A2 maturation protein.</text>
</comment>
<comment type="function">
    <text evidence="1">Acts as a translational repressor of viral replicase synthesis late in infection. This latter function is the result of capsid protein interaction with an RNA hairpin which contains the replicase ribosome-binding site.</text>
</comment>
<comment type="subunit">
    <text evidence="1">Homodimer. The capsid proteins form dimers that assemble by group of 5. Twelve such pentamers are linked together with free dimers. The homodimers binds to the viral RNA via an operator hairpin, but also to many other RNA sequences in the viral genome; this interaction probably shifts the virus from the replicative to the assembly phase and ensures specific encapsidation of the viral genome.</text>
</comment>
<comment type="subcellular location">
    <subcellularLocation>
        <location evidence="1">Virion</location>
    </subcellularLocation>
    <text evidence="1">The shell is composed of 178 copies of the capsid protein and 1 copy of the maturation protein.</text>
</comment>
<comment type="similarity">
    <text evidence="3">Belongs to the Leviviricetes capsid protein family.</text>
</comment>
<reference key="1">
    <citation type="journal article" date="2006" name="Microbiol. Immunol.">
        <title>Analysis of six new genes encoding lysis proteins and coat proteins in Escherichia coli group A RNA phages.</title>
        <authorList>
            <person name="Nishihara T."/>
            <person name="Fujisaki S."/>
            <person name="Nishimura Y."/>
            <person name="Minami Y."/>
            <person name="Yubisui T."/>
        </authorList>
    </citation>
    <scope>NUCLEOTIDE SEQUENCE [GENOMIC RNA]</scope>
</reference>
<reference key="2">
    <citation type="journal article" date="1970" name="J. Biochem.">
        <title>Amino acid sequence of the coat protein of the RNA phage ZR.</title>
        <authorList>
            <person name="Nishihara T."/>
            <person name="Nozu Y."/>
            <person name="Okada Y."/>
        </authorList>
    </citation>
    <scope>PROTEIN SEQUENCE OF 2-130</scope>
</reference>
<organism>
    <name type="scientific">Enterobacteria phage ZR</name>
    <name type="common">Bacteriophage ZR</name>
    <dbReference type="NCBI Taxonomy" id="332942"/>
    <lineage>
        <taxon>Viruses</taxon>
        <taxon>Riboviria</taxon>
        <taxon>Orthornavirae</taxon>
        <taxon>Lenarviricota</taxon>
        <taxon>Leviviricetes</taxon>
        <taxon>Norzivirales</taxon>
        <taxon>Fiersviridae</taxon>
        <taxon>Emesvirus</taxon>
        <taxon>Emesvirus zinderi</taxon>
    </lineage>
</organism>
<organismHost>
    <name type="scientific">Escherichia coli</name>
    <dbReference type="NCBI Taxonomy" id="562"/>
</organismHost>
<name>CAPSD_BPZR</name>
<accession>P69171</accession>
<accession>P03613</accession>
<accession>Q2V0T1</accession>
<sequence>MASNFTQFVLVNDGGTGNVTVAPSNFANGVAEWISSNSRSQAYKVTCSVRQSSAQNRKYTIKVEVPKVATQTVGGVELPVAAWRSYLNMELTIPIFATNSDCELIVKAMQGLLKDGNPIPSAIAANSGIY</sequence>
<dbReference type="EMBL" id="AB218931">
    <property type="protein sequence ID" value="BAE54365.1"/>
    <property type="molecule type" value="Genomic_RNA"/>
</dbReference>
<dbReference type="PIR" id="D04222">
    <property type="entry name" value="VCBPZR"/>
</dbReference>
<dbReference type="SMR" id="P69171"/>
<dbReference type="GO" id="GO:0039617">
    <property type="term" value="C:T=3 icosahedral viral capsid"/>
    <property type="evidence" value="ECO:0007669"/>
    <property type="project" value="UniProtKB-KW"/>
</dbReference>
<dbReference type="GO" id="GO:0003723">
    <property type="term" value="F:RNA binding"/>
    <property type="evidence" value="ECO:0007669"/>
    <property type="project" value="UniProtKB-KW"/>
</dbReference>
<dbReference type="GO" id="GO:0005198">
    <property type="term" value="F:structural molecule activity"/>
    <property type="evidence" value="ECO:0007669"/>
    <property type="project" value="InterPro"/>
</dbReference>
<dbReference type="GO" id="GO:0006417">
    <property type="term" value="P:regulation of translation"/>
    <property type="evidence" value="ECO:0007669"/>
    <property type="project" value="UniProtKB-KW"/>
</dbReference>
<dbReference type="Gene3D" id="3.30.380.10">
    <property type="entry name" value="MS2 Viral Coat Protein"/>
    <property type="match status" value="1"/>
</dbReference>
<dbReference type="InterPro" id="IPR002703">
    <property type="entry name" value="Levivir_coat"/>
</dbReference>
<dbReference type="InterPro" id="IPR015954">
    <property type="entry name" value="Phage_RNA-type_capsid"/>
</dbReference>
<dbReference type="Pfam" id="PF01819">
    <property type="entry name" value="Levi_coat"/>
    <property type="match status" value="1"/>
</dbReference>
<dbReference type="SUPFAM" id="SSF55405">
    <property type="entry name" value="RNA bacteriophage capsid protein"/>
    <property type="match status" value="1"/>
</dbReference>
<evidence type="ECO:0000250" key="1">
    <source>
        <dbReference type="UniProtKB" id="P03612"/>
    </source>
</evidence>
<evidence type="ECO:0000269" key="2">
    <source>
    </source>
</evidence>
<evidence type="ECO:0000305" key="3"/>